<organism>
    <name type="scientific">Picosynechococcus sp. (strain ATCC 27264 / PCC 7002 / PR-6)</name>
    <name type="common">Agmenellum quadruplicatum</name>
    <dbReference type="NCBI Taxonomy" id="32049"/>
    <lineage>
        <taxon>Bacteria</taxon>
        <taxon>Bacillati</taxon>
        <taxon>Cyanobacteriota</taxon>
        <taxon>Cyanophyceae</taxon>
        <taxon>Oscillatoriophycideae</taxon>
        <taxon>Chroococcales</taxon>
        <taxon>Geminocystaceae</taxon>
        <taxon>Picosynechococcus</taxon>
    </lineage>
</organism>
<sequence length="427" mass="47691">MLDIKLLRENPTLVQERLDARKAGEYAIQPILDLDIQQRTLEGDRSQLQARSNEIGKLIGQKIKGGADPKGEEIATLKAEGNEIKQKLADLEPQEKELKAQIYNLLLALPNLPDQSTPVGTNETENVEVRRWGEAHKPTNENILPHWEIGEQLGILEFARSVKVAQSRFVSLVGAGAALERALINFMLDQQIAAGYVEVMPPVLINSDSLTGTGQLPKFAEESFRCADDDLWLTPTAEVPVTNLYRYEILEAENLPIYHCAYTPCFRREAGSYGKDTRGLIRLHQFNKVELVKFVHPETSAAEHEKLVANAEAILQALKLPYRVLELCSGDLGFSAGKCYDLEVWLPSADTYREISSCSNFYDFQARRAGIRFKEAGKKGTQFVHTLNGSGLAIGRTMAAILENYQQPNGTVAVPEVLRPYLKRDFL</sequence>
<dbReference type="EC" id="6.1.1.11" evidence="1"/>
<dbReference type="EMBL" id="CP000951">
    <property type="protein sequence ID" value="ACB00306.1"/>
    <property type="molecule type" value="Genomic_DNA"/>
</dbReference>
<dbReference type="RefSeq" id="WP_012307924.1">
    <property type="nucleotide sequence ID" value="NZ_JAHHPU010000006.1"/>
</dbReference>
<dbReference type="SMR" id="B1XJM0"/>
<dbReference type="STRING" id="32049.SYNPCC7002_A2328"/>
<dbReference type="KEGG" id="syp:SYNPCC7002_A2328"/>
<dbReference type="eggNOG" id="COG0172">
    <property type="taxonomic scope" value="Bacteria"/>
</dbReference>
<dbReference type="HOGENOM" id="CLU_023797_1_1_3"/>
<dbReference type="UniPathway" id="UPA00906">
    <property type="reaction ID" value="UER00895"/>
</dbReference>
<dbReference type="Proteomes" id="UP000001688">
    <property type="component" value="Chromosome"/>
</dbReference>
<dbReference type="GO" id="GO:0005737">
    <property type="term" value="C:cytoplasm"/>
    <property type="evidence" value="ECO:0007669"/>
    <property type="project" value="UniProtKB-SubCell"/>
</dbReference>
<dbReference type="GO" id="GO:0005524">
    <property type="term" value="F:ATP binding"/>
    <property type="evidence" value="ECO:0007669"/>
    <property type="project" value="UniProtKB-UniRule"/>
</dbReference>
<dbReference type="GO" id="GO:0004828">
    <property type="term" value="F:serine-tRNA ligase activity"/>
    <property type="evidence" value="ECO:0007669"/>
    <property type="project" value="UniProtKB-UniRule"/>
</dbReference>
<dbReference type="GO" id="GO:0016260">
    <property type="term" value="P:selenocysteine biosynthetic process"/>
    <property type="evidence" value="ECO:0007669"/>
    <property type="project" value="UniProtKB-UniRule"/>
</dbReference>
<dbReference type="GO" id="GO:0006434">
    <property type="term" value="P:seryl-tRNA aminoacylation"/>
    <property type="evidence" value="ECO:0007669"/>
    <property type="project" value="UniProtKB-UniRule"/>
</dbReference>
<dbReference type="CDD" id="cd00770">
    <property type="entry name" value="SerRS_core"/>
    <property type="match status" value="1"/>
</dbReference>
<dbReference type="Gene3D" id="3.30.930.10">
    <property type="entry name" value="Bira Bifunctional Protein, Domain 2"/>
    <property type="match status" value="1"/>
</dbReference>
<dbReference type="Gene3D" id="1.10.287.40">
    <property type="entry name" value="Serine-tRNA synthetase, tRNA binding domain"/>
    <property type="match status" value="1"/>
</dbReference>
<dbReference type="HAMAP" id="MF_00176">
    <property type="entry name" value="Ser_tRNA_synth_type1"/>
    <property type="match status" value="1"/>
</dbReference>
<dbReference type="InterPro" id="IPR002314">
    <property type="entry name" value="aa-tRNA-synt_IIb"/>
</dbReference>
<dbReference type="InterPro" id="IPR006195">
    <property type="entry name" value="aa-tRNA-synth_II"/>
</dbReference>
<dbReference type="InterPro" id="IPR045864">
    <property type="entry name" value="aa-tRNA-synth_II/BPL/LPL"/>
</dbReference>
<dbReference type="InterPro" id="IPR002317">
    <property type="entry name" value="Ser-tRNA-ligase_type_1"/>
</dbReference>
<dbReference type="InterPro" id="IPR015866">
    <property type="entry name" value="Ser-tRNA-synth_1_N"/>
</dbReference>
<dbReference type="InterPro" id="IPR042103">
    <property type="entry name" value="SerRS_1_N_sf"/>
</dbReference>
<dbReference type="InterPro" id="IPR033729">
    <property type="entry name" value="SerRS_core"/>
</dbReference>
<dbReference type="InterPro" id="IPR010978">
    <property type="entry name" value="tRNA-bd_arm"/>
</dbReference>
<dbReference type="NCBIfam" id="TIGR00414">
    <property type="entry name" value="serS"/>
    <property type="match status" value="1"/>
</dbReference>
<dbReference type="PANTHER" id="PTHR43697:SF1">
    <property type="entry name" value="SERINE--TRNA LIGASE"/>
    <property type="match status" value="1"/>
</dbReference>
<dbReference type="PANTHER" id="PTHR43697">
    <property type="entry name" value="SERYL-TRNA SYNTHETASE"/>
    <property type="match status" value="1"/>
</dbReference>
<dbReference type="Pfam" id="PF02403">
    <property type="entry name" value="Seryl_tRNA_N"/>
    <property type="match status" value="1"/>
</dbReference>
<dbReference type="Pfam" id="PF00587">
    <property type="entry name" value="tRNA-synt_2b"/>
    <property type="match status" value="1"/>
</dbReference>
<dbReference type="PIRSF" id="PIRSF001529">
    <property type="entry name" value="Ser-tRNA-synth_IIa"/>
    <property type="match status" value="1"/>
</dbReference>
<dbReference type="PRINTS" id="PR00981">
    <property type="entry name" value="TRNASYNTHSER"/>
</dbReference>
<dbReference type="SUPFAM" id="SSF55681">
    <property type="entry name" value="Class II aaRS and biotin synthetases"/>
    <property type="match status" value="1"/>
</dbReference>
<dbReference type="SUPFAM" id="SSF46589">
    <property type="entry name" value="tRNA-binding arm"/>
    <property type="match status" value="1"/>
</dbReference>
<dbReference type="PROSITE" id="PS50862">
    <property type="entry name" value="AA_TRNA_LIGASE_II"/>
    <property type="match status" value="1"/>
</dbReference>
<comment type="function">
    <text evidence="1">Catalyzes the attachment of serine to tRNA(Ser). Is also able to aminoacylate tRNA(Sec) with serine, to form the misacylated tRNA L-seryl-tRNA(Sec), which will be further converted into selenocysteinyl-tRNA(Sec).</text>
</comment>
<comment type="catalytic activity">
    <reaction evidence="1">
        <text>tRNA(Ser) + L-serine + ATP = L-seryl-tRNA(Ser) + AMP + diphosphate + H(+)</text>
        <dbReference type="Rhea" id="RHEA:12292"/>
        <dbReference type="Rhea" id="RHEA-COMP:9669"/>
        <dbReference type="Rhea" id="RHEA-COMP:9703"/>
        <dbReference type="ChEBI" id="CHEBI:15378"/>
        <dbReference type="ChEBI" id="CHEBI:30616"/>
        <dbReference type="ChEBI" id="CHEBI:33019"/>
        <dbReference type="ChEBI" id="CHEBI:33384"/>
        <dbReference type="ChEBI" id="CHEBI:78442"/>
        <dbReference type="ChEBI" id="CHEBI:78533"/>
        <dbReference type="ChEBI" id="CHEBI:456215"/>
        <dbReference type="EC" id="6.1.1.11"/>
    </reaction>
</comment>
<comment type="catalytic activity">
    <reaction evidence="1">
        <text>tRNA(Sec) + L-serine + ATP = L-seryl-tRNA(Sec) + AMP + diphosphate + H(+)</text>
        <dbReference type="Rhea" id="RHEA:42580"/>
        <dbReference type="Rhea" id="RHEA-COMP:9742"/>
        <dbReference type="Rhea" id="RHEA-COMP:10128"/>
        <dbReference type="ChEBI" id="CHEBI:15378"/>
        <dbReference type="ChEBI" id="CHEBI:30616"/>
        <dbReference type="ChEBI" id="CHEBI:33019"/>
        <dbReference type="ChEBI" id="CHEBI:33384"/>
        <dbReference type="ChEBI" id="CHEBI:78442"/>
        <dbReference type="ChEBI" id="CHEBI:78533"/>
        <dbReference type="ChEBI" id="CHEBI:456215"/>
        <dbReference type="EC" id="6.1.1.11"/>
    </reaction>
</comment>
<comment type="pathway">
    <text evidence="1">Aminoacyl-tRNA biosynthesis; selenocysteinyl-tRNA(Sec) biosynthesis; L-seryl-tRNA(Sec) from L-serine and tRNA(Sec): step 1/1.</text>
</comment>
<comment type="subunit">
    <text evidence="1">Homodimer. The tRNA molecule binds across the dimer.</text>
</comment>
<comment type="subcellular location">
    <subcellularLocation>
        <location evidence="1">Cytoplasm</location>
    </subcellularLocation>
</comment>
<comment type="domain">
    <text evidence="1">Consists of two distinct domains, a catalytic core and a N-terminal extension that is involved in tRNA binding.</text>
</comment>
<comment type="similarity">
    <text evidence="1">Belongs to the class-II aminoacyl-tRNA synthetase family. Type-1 seryl-tRNA synthetase subfamily.</text>
</comment>
<protein>
    <recommendedName>
        <fullName evidence="1">Serine--tRNA ligase</fullName>
        <ecNumber evidence="1">6.1.1.11</ecNumber>
    </recommendedName>
    <alternativeName>
        <fullName evidence="1">Seryl-tRNA synthetase</fullName>
        <shortName evidence="1">SerRS</shortName>
    </alternativeName>
    <alternativeName>
        <fullName evidence="1">Seryl-tRNA(Ser/Sec) synthetase</fullName>
    </alternativeName>
</protein>
<keyword id="KW-0030">Aminoacyl-tRNA synthetase</keyword>
<keyword id="KW-0067">ATP-binding</keyword>
<keyword id="KW-0963">Cytoplasm</keyword>
<keyword id="KW-0436">Ligase</keyword>
<keyword id="KW-0547">Nucleotide-binding</keyword>
<keyword id="KW-0648">Protein biosynthesis</keyword>
<keyword id="KW-1185">Reference proteome</keyword>
<reference key="1">
    <citation type="submission" date="2008-02" db="EMBL/GenBank/DDBJ databases">
        <title>Complete sequence of Synechococcus sp. PCC 7002.</title>
        <authorList>
            <person name="Li T."/>
            <person name="Zhao J."/>
            <person name="Zhao C."/>
            <person name="Liu Z."/>
            <person name="Zhao F."/>
            <person name="Marquardt J."/>
            <person name="Nomura C.T."/>
            <person name="Persson S."/>
            <person name="Detter J.C."/>
            <person name="Richardson P.M."/>
            <person name="Lanz C."/>
            <person name="Schuster S.C."/>
            <person name="Wang J."/>
            <person name="Li S."/>
            <person name="Huang X."/>
            <person name="Cai T."/>
            <person name="Yu Z."/>
            <person name="Luo J."/>
            <person name="Zhao J."/>
            <person name="Bryant D.A."/>
        </authorList>
    </citation>
    <scope>NUCLEOTIDE SEQUENCE [LARGE SCALE GENOMIC DNA]</scope>
    <source>
        <strain>ATCC 27264 / PCC 7002 / PR-6</strain>
    </source>
</reference>
<gene>
    <name evidence="1" type="primary">serS</name>
    <name type="ordered locus">SYNPCC7002_A2328</name>
</gene>
<evidence type="ECO:0000255" key="1">
    <source>
        <dbReference type="HAMAP-Rule" id="MF_00176"/>
    </source>
</evidence>
<accession>B1XJM0</accession>
<proteinExistence type="inferred from homology"/>
<feature type="chain" id="PRO_1000098134" description="Serine--tRNA ligase">
    <location>
        <begin position="1"/>
        <end position="427"/>
    </location>
</feature>
<feature type="binding site" evidence="1">
    <location>
        <begin position="236"/>
        <end position="238"/>
    </location>
    <ligand>
        <name>L-serine</name>
        <dbReference type="ChEBI" id="CHEBI:33384"/>
    </ligand>
</feature>
<feature type="binding site" evidence="1">
    <location>
        <begin position="267"/>
        <end position="269"/>
    </location>
    <ligand>
        <name>ATP</name>
        <dbReference type="ChEBI" id="CHEBI:30616"/>
    </ligand>
</feature>
<feature type="binding site" evidence="1">
    <location>
        <position position="290"/>
    </location>
    <ligand>
        <name>L-serine</name>
        <dbReference type="ChEBI" id="CHEBI:33384"/>
    </ligand>
</feature>
<feature type="binding site" evidence="1">
    <location>
        <begin position="354"/>
        <end position="357"/>
    </location>
    <ligand>
        <name>ATP</name>
        <dbReference type="ChEBI" id="CHEBI:30616"/>
    </ligand>
</feature>
<feature type="binding site" evidence="1">
    <location>
        <position position="390"/>
    </location>
    <ligand>
        <name>L-serine</name>
        <dbReference type="ChEBI" id="CHEBI:33384"/>
    </ligand>
</feature>
<name>SYS_PICP2</name>